<accession>Q322D7</accession>
<gene>
    <name evidence="1" type="primary">ruvC</name>
    <name type="ordered locus">SBO_1186</name>
</gene>
<reference key="1">
    <citation type="journal article" date="2005" name="Nucleic Acids Res.">
        <title>Genome dynamics and diversity of Shigella species, the etiologic agents of bacillary dysentery.</title>
        <authorList>
            <person name="Yang F."/>
            <person name="Yang J."/>
            <person name="Zhang X."/>
            <person name="Chen L."/>
            <person name="Jiang Y."/>
            <person name="Yan Y."/>
            <person name="Tang X."/>
            <person name="Wang J."/>
            <person name="Xiong Z."/>
            <person name="Dong J."/>
            <person name="Xue Y."/>
            <person name="Zhu Y."/>
            <person name="Xu X."/>
            <person name="Sun L."/>
            <person name="Chen S."/>
            <person name="Nie H."/>
            <person name="Peng J."/>
            <person name="Xu J."/>
            <person name="Wang Y."/>
            <person name="Yuan Z."/>
            <person name="Wen Y."/>
            <person name="Yao Z."/>
            <person name="Shen Y."/>
            <person name="Qiang B."/>
            <person name="Hou Y."/>
            <person name="Yu J."/>
            <person name="Jin Q."/>
        </authorList>
    </citation>
    <scope>NUCLEOTIDE SEQUENCE [LARGE SCALE GENOMIC DNA]</scope>
    <source>
        <strain>Sb227</strain>
    </source>
</reference>
<dbReference type="EC" id="3.1.21.10" evidence="1"/>
<dbReference type="EMBL" id="CP000036">
    <property type="protein sequence ID" value="ABB65821.1"/>
    <property type="molecule type" value="Genomic_DNA"/>
</dbReference>
<dbReference type="RefSeq" id="WP_001295503.1">
    <property type="nucleotide sequence ID" value="NC_007613.1"/>
</dbReference>
<dbReference type="SMR" id="Q322D7"/>
<dbReference type="GeneID" id="89516631"/>
<dbReference type="KEGG" id="sbo:SBO_1186"/>
<dbReference type="HOGENOM" id="CLU_091257_2_1_6"/>
<dbReference type="Proteomes" id="UP000007067">
    <property type="component" value="Chromosome"/>
</dbReference>
<dbReference type="GO" id="GO:0005737">
    <property type="term" value="C:cytoplasm"/>
    <property type="evidence" value="ECO:0007669"/>
    <property type="project" value="UniProtKB-SubCell"/>
</dbReference>
<dbReference type="GO" id="GO:0048476">
    <property type="term" value="C:Holliday junction resolvase complex"/>
    <property type="evidence" value="ECO:0007669"/>
    <property type="project" value="UniProtKB-UniRule"/>
</dbReference>
<dbReference type="GO" id="GO:0008821">
    <property type="term" value="F:crossover junction DNA endonuclease activity"/>
    <property type="evidence" value="ECO:0007669"/>
    <property type="project" value="UniProtKB-UniRule"/>
</dbReference>
<dbReference type="GO" id="GO:0003677">
    <property type="term" value="F:DNA binding"/>
    <property type="evidence" value="ECO:0007669"/>
    <property type="project" value="UniProtKB-KW"/>
</dbReference>
<dbReference type="GO" id="GO:0000287">
    <property type="term" value="F:magnesium ion binding"/>
    <property type="evidence" value="ECO:0007669"/>
    <property type="project" value="UniProtKB-UniRule"/>
</dbReference>
<dbReference type="GO" id="GO:0006310">
    <property type="term" value="P:DNA recombination"/>
    <property type="evidence" value="ECO:0007669"/>
    <property type="project" value="UniProtKB-UniRule"/>
</dbReference>
<dbReference type="GO" id="GO:0006281">
    <property type="term" value="P:DNA repair"/>
    <property type="evidence" value="ECO:0007669"/>
    <property type="project" value="UniProtKB-UniRule"/>
</dbReference>
<dbReference type="CDD" id="cd16962">
    <property type="entry name" value="RuvC"/>
    <property type="match status" value="1"/>
</dbReference>
<dbReference type="FunFam" id="3.30.420.10:FF:000002">
    <property type="entry name" value="Crossover junction endodeoxyribonuclease RuvC"/>
    <property type="match status" value="1"/>
</dbReference>
<dbReference type="Gene3D" id="3.30.420.10">
    <property type="entry name" value="Ribonuclease H-like superfamily/Ribonuclease H"/>
    <property type="match status" value="1"/>
</dbReference>
<dbReference type="HAMAP" id="MF_00034">
    <property type="entry name" value="RuvC"/>
    <property type="match status" value="1"/>
</dbReference>
<dbReference type="InterPro" id="IPR012337">
    <property type="entry name" value="RNaseH-like_sf"/>
</dbReference>
<dbReference type="InterPro" id="IPR036397">
    <property type="entry name" value="RNaseH_sf"/>
</dbReference>
<dbReference type="InterPro" id="IPR020563">
    <property type="entry name" value="X-over_junc_endoDNase_Mg_BS"/>
</dbReference>
<dbReference type="InterPro" id="IPR002176">
    <property type="entry name" value="X-over_junc_endoDNase_RuvC"/>
</dbReference>
<dbReference type="NCBIfam" id="NF000711">
    <property type="entry name" value="PRK00039.2-1"/>
    <property type="match status" value="1"/>
</dbReference>
<dbReference type="NCBIfam" id="TIGR00228">
    <property type="entry name" value="ruvC"/>
    <property type="match status" value="1"/>
</dbReference>
<dbReference type="PANTHER" id="PTHR30194">
    <property type="entry name" value="CROSSOVER JUNCTION ENDODEOXYRIBONUCLEASE RUVC"/>
    <property type="match status" value="1"/>
</dbReference>
<dbReference type="PANTHER" id="PTHR30194:SF3">
    <property type="entry name" value="CROSSOVER JUNCTION ENDODEOXYRIBONUCLEASE RUVC"/>
    <property type="match status" value="1"/>
</dbReference>
<dbReference type="Pfam" id="PF02075">
    <property type="entry name" value="RuvC"/>
    <property type="match status" value="1"/>
</dbReference>
<dbReference type="PRINTS" id="PR00696">
    <property type="entry name" value="RSOLVASERUVC"/>
</dbReference>
<dbReference type="SUPFAM" id="SSF53098">
    <property type="entry name" value="Ribonuclease H-like"/>
    <property type="match status" value="1"/>
</dbReference>
<dbReference type="PROSITE" id="PS01321">
    <property type="entry name" value="RUVC"/>
    <property type="match status" value="1"/>
</dbReference>
<sequence>MAIILGIDPGSRVTGYGVIRQVGRQLSYLGSGCIRTKVDDLPSRLKLIYAGVTEIITQFQPDYFAIEQVFMAKNADSALKLGQARGVAIVAAVNQELPVFEYAARQVKQTVVGIGSAEKSQVQHMVRTLLKLPANPQADAADALAIAITHCHVSQNAMQMSESRLNLARGRLR</sequence>
<feature type="chain" id="PRO_0000225176" description="Crossover junction endodeoxyribonuclease RuvC">
    <location>
        <begin position="1"/>
        <end position="173"/>
    </location>
</feature>
<feature type="active site" evidence="1">
    <location>
        <position position="8"/>
    </location>
</feature>
<feature type="active site" evidence="1">
    <location>
        <position position="67"/>
    </location>
</feature>
<feature type="active site" evidence="1">
    <location>
        <position position="139"/>
    </location>
</feature>
<feature type="binding site" evidence="1">
    <location>
        <position position="8"/>
    </location>
    <ligand>
        <name>Mg(2+)</name>
        <dbReference type="ChEBI" id="CHEBI:18420"/>
        <label>1</label>
    </ligand>
</feature>
<feature type="binding site" evidence="1">
    <location>
        <position position="67"/>
    </location>
    <ligand>
        <name>Mg(2+)</name>
        <dbReference type="ChEBI" id="CHEBI:18420"/>
        <label>2</label>
    </ligand>
</feature>
<feature type="binding site" evidence="1">
    <location>
        <position position="139"/>
    </location>
    <ligand>
        <name>Mg(2+)</name>
        <dbReference type="ChEBI" id="CHEBI:18420"/>
        <label>1</label>
    </ligand>
</feature>
<keyword id="KW-0963">Cytoplasm</keyword>
<keyword id="KW-0227">DNA damage</keyword>
<keyword id="KW-0233">DNA recombination</keyword>
<keyword id="KW-0234">DNA repair</keyword>
<keyword id="KW-0238">DNA-binding</keyword>
<keyword id="KW-0255">Endonuclease</keyword>
<keyword id="KW-0378">Hydrolase</keyword>
<keyword id="KW-0460">Magnesium</keyword>
<keyword id="KW-0479">Metal-binding</keyword>
<keyword id="KW-0540">Nuclease</keyword>
<organism>
    <name type="scientific">Shigella boydii serotype 4 (strain Sb227)</name>
    <dbReference type="NCBI Taxonomy" id="300268"/>
    <lineage>
        <taxon>Bacteria</taxon>
        <taxon>Pseudomonadati</taxon>
        <taxon>Pseudomonadota</taxon>
        <taxon>Gammaproteobacteria</taxon>
        <taxon>Enterobacterales</taxon>
        <taxon>Enterobacteriaceae</taxon>
        <taxon>Shigella</taxon>
    </lineage>
</organism>
<comment type="function">
    <text evidence="1">The RuvA-RuvB-RuvC complex processes Holliday junction (HJ) DNA during genetic recombination and DNA repair. Endonuclease that resolves HJ intermediates. Cleaves cruciform DNA by making single-stranded nicks across the HJ at symmetrical positions within the homologous arms, yielding a 5'-phosphate and a 3'-hydroxyl group; requires a central core of homology in the junction. The consensus cleavage sequence is 5'-(A/T)TT(C/G)-3'. Cleavage occurs on the 3'-side of the TT dinucleotide at the point of strand exchange. HJ branch migration catalyzed by RuvA-RuvB allows RuvC to scan DNA until it finds its consensus sequence, where it cleaves and resolves the cruciform DNA.</text>
</comment>
<comment type="catalytic activity">
    <reaction evidence="1">
        <text>Endonucleolytic cleavage at a junction such as a reciprocal single-stranded crossover between two homologous DNA duplexes (Holliday junction).</text>
        <dbReference type="EC" id="3.1.21.10"/>
    </reaction>
</comment>
<comment type="cofactor">
    <cofactor evidence="1">
        <name>Mg(2+)</name>
        <dbReference type="ChEBI" id="CHEBI:18420"/>
    </cofactor>
    <text evidence="1">Binds 2 Mg(2+) ion per subunit.</text>
</comment>
<comment type="subunit">
    <text evidence="1">Homodimer which binds Holliday junction (HJ) DNA. The HJ becomes 2-fold symmetrical on binding to RuvC with unstacked arms; it has a different conformation from HJ DNA in complex with RuvA. In the full resolvosome a probable DNA-RuvA(4)-RuvB(12)-RuvC(2) complex forms which resolves the HJ.</text>
</comment>
<comment type="subcellular location">
    <subcellularLocation>
        <location evidence="1">Cytoplasm</location>
    </subcellularLocation>
</comment>
<comment type="similarity">
    <text evidence="1">Belongs to the RuvC family.</text>
</comment>
<protein>
    <recommendedName>
        <fullName evidence="1">Crossover junction endodeoxyribonuclease RuvC</fullName>
        <ecNumber evidence="1">3.1.21.10</ecNumber>
    </recommendedName>
    <alternativeName>
        <fullName evidence="1">Holliday junction nuclease RuvC</fullName>
    </alternativeName>
    <alternativeName>
        <fullName evidence="1">Holliday junction resolvase RuvC</fullName>
    </alternativeName>
</protein>
<evidence type="ECO:0000255" key="1">
    <source>
        <dbReference type="HAMAP-Rule" id="MF_00034"/>
    </source>
</evidence>
<proteinExistence type="inferred from homology"/>
<name>RUVC_SHIBS</name>